<accession>Q8GVE3</accession>
<dbReference type="EC" id="2.4.1.236" evidence="5"/>
<dbReference type="EMBL" id="AY048882">
    <property type="protein sequence ID" value="AAL06646.2"/>
    <property type="molecule type" value="mRNA"/>
</dbReference>
<dbReference type="SMR" id="Q8GVE3"/>
<dbReference type="CAZy" id="GT1">
    <property type="family name" value="Glycosyltransferase Family 1"/>
</dbReference>
<dbReference type="KEGG" id="ag:AAL06646"/>
<dbReference type="BRENDA" id="2.4.1.236">
    <property type="organism ID" value="1410"/>
</dbReference>
<dbReference type="SABIO-RK" id="Q8GVE3"/>
<dbReference type="GO" id="GO:0016020">
    <property type="term" value="C:membrane"/>
    <property type="evidence" value="ECO:0007669"/>
    <property type="project" value="UniProtKB-SubCell"/>
</dbReference>
<dbReference type="GO" id="GO:0033835">
    <property type="term" value="F:flavanone 7-O-glucoside 2''-O-beta-L-rhamnosyltransferase activity"/>
    <property type="evidence" value="ECO:0007669"/>
    <property type="project" value="UniProtKB-EC"/>
</dbReference>
<dbReference type="GO" id="GO:0008194">
    <property type="term" value="F:UDP-glycosyltransferase activity"/>
    <property type="evidence" value="ECO:0007669"/>
    <property type="project" value="InterPro"/>
</dbReference>
<dbReference type="GO" id="GO:1901137">
    <property type="term" value="P:carbohydrate derivative biosynthetic process"/>
    <property type="evidence" value="ECO:0007669"/>
    <property type="project" value="UniProtKB-ARBA"/>
</dbReference>
<dbReference type="CDD" id="cd03784">
    <property type="entry name" value="GT1_Gtf-like"/>
    <property type="match status" value="1"/>
</dbReference>
<dbReference type="FunFam" id="3.40.50.2000:FF:000060">
    <property type="entry name" value="Glycosyltransferase"/>
    <property type="match status" value="1"/>
</dbReference>
<dbReference type="Gene3D" id="3.40.50.2000">
    <property type="entry name" value="Glycogen Phosphorylase B"/>
    <property type="match status" value="2"/>
</dbReference>
<dbReference type="InterPro" id="IPR002213">
    <property type="entry name" value="UDP_glucos_trans"/>
</dbReference>
<dbReference type="InterPro" id="IPR035595">
    <property type="entry name" value="UDP_glycos_trans_CS"/>
</dbReference>
<dbReference type="PANTHER" id="PTHR48044">
    <property type="entry name" value="GLYCOSYLTRANSFERASE"/>
    <property type="match status" value="1"/>
</dbReference>
<dbReference type="PANTHER" id="PTHR48044:SF9">
    <property type="entry name" value="UDP-GLYCOSYLTRANSFERASE SUPERFAMILY PROTEIN"/>
    <property type="match status" value="1"/>
</dbReference>
<dbReference type="Pfam" id="PF00201">
    <property type="entry name" value="UDPGT"/>
    <property type="match status" value="1"/>
</dbReference>
<dbReference type="SUPFAM" id="SSF53756">
    <property type="entry name" value="UDP-Glycosyltransferase/glycogen phosphorylase"/>
    <property type="match status" value="1"/>
</dbReference>
<dbReference type="PROSITE" id="PS00375">
    <property type="entry name" value="UDPGT"/>
    <property type="match status" value="1"/>
</dbReference>
<proteinExistence type="evidence at protein level"/>
<protein>
    <recommendedName>
        <fullName>Flavanone 7-O-glucoside 2''-O-beta-L-rhamnosyltransferase</fullName>
        <ecNumber evidence="5">2.4.1.236</ecNumber>
    </recommendedName>
    <alternativeName>
        <fullName>1,2 rhamnosyltransferase</fullName>
    </alternativeName>
</protein>
<evidence type="ECO:0000250" key="1">
    <source>
        <dbReference type="UniProtKB" id="A0A0A1HA03"/>
    </source>
</evidence>
<evidence type="ECO:0000250" key="2">
    <source>
        <dbReference type="UniProtKB" id="Q9LNE6"/>
    </source>
</evidence>
<evidence type="ECO:0000255" key="3"/>
<evidence type="ECO:0000269" key="4">
    <source>
    </source>
</evidence>
<evidence type="ECO:0000269" key="5">
    <source>
    </source>
</evidence>
<evidence type="ECO:0000305" key="6"/>
<keyword id="KW-0175">Coiled coil</keyword>
<keyword id="KW-0903">Direct protein sequencing</keyword>
<keyword id="KW-0328">Glycosyltransferase</keyword>
<keyword id="KW-0472">Membrane</keyword>
<keyword id="KW-0808">Transferase</keyword>
<keyword id="KW-0812">Transmembrane</keyword>
<keyword id="KW-1133">Transmembrane helix</keyword>
<comment type="function">
    <text evidence="5">Involved in the production of the bitter neohesperidosides in citrus. Shows a strict specificity for UDP-rhamnose as donor.</text>
</comment>
<comment type="catalytic activity">
    <reaction evidence="5">
        <text>flavanone 7-O-beta-D-glucoside + UDP-beta-L-rhamnose = flavanone 7-O-[alpha-L-rhamnosyl-(1-&gt;2)-beta-D-glucoside] + UDP + H(+)</text>
        <dbReference type="Rhea" id="RHEA:15473"/>
        <dbReference type="ChEBI" id="CHEBI:15378"/>
        <dbReference type="ChEBI" id="CHEBI:27590"/>
        <dbReference type="ChEBI" id="CHEBI:58223"/>
        <dbReference type="ChEBI" id="CHEBI:79985"/>
        <dbReference type="ChEBI" id="CHEBI:83836"/>
        <dbReference type="EC" id="2.4.1.236"/>
    </reaction>
</comment>
<comment type="biophysicochemical properties">
    <kinetics>
        <KM evidence="5">2.4 uM for prunin</KM>
        <KM evidence="5">41.5 uM for hesperetin-7-O-glucoside</KM>
        <KM evidence="5">1.3 uM for UDP-rhamnose with prunin as substrate</KM>
        <KM evidence="5">1.1 uM for UDP-rhamnose with hesperetin-7-O-glucoside as substrate</KM>
    </kinetics>
</comment>
<comment type="subunit">
    <text evidence="5">Monomer.</text>
</comment>
<comment type="subcellular location">
    <subcellularLocation>
        <location evidence="6">Membrane</location>
        <topology evidence="6">Single-pass membrane protein</topology>
    </subcellularLocation>
</comment>
<comment type="tissue specificity">
    <text evidence="4">Expressed in young fruits and leaves.</text>
</comment>
<comment type="induction">
    <text evidence="5">Inhibited by 10 uM UDP.</text>
</comment>
<comment type="similarity">
    <text evidence="6">Belongs to the UDP-glycosyltransferase family.</text>
</comment>
<sequence>MDTKHQDKPSILMLPWLAHGHIAPHLELAKKLSQKNFHIYFCSTPNNLQSFGRNVEKNFSSSIQLIELQLPNTFPELPSQNQTTKNLPPHLIYTLVGAFEDAKPAFCNILETLKPTLVMYDLFQPWAAEAAYQYDIAAILFLPLSAVACSFLLHNIVNPSLKYPFFESDYQDRESKNINYFLHLTANGTLNKDRFLKAFELSCKFVFIKTSREIESKYLDYFPSLMGNEIIPVGPLIQEPTFKEDDTKIMDWLSQKEPRSVVYASFGSEYFPSKDEIHEIASGLLLSEVNFIWAFRLHPDEKMTIEEALPQGFAEEIERNNKGMIVQGWVPQAKILRHGSIGGFLSHCGWGSVVEGMVFGVPIIGVPMAYEQPSNAKVVVDNGMGMVVPRDKINQRLGGEEVARVIKHVVLQEEAKQIRRKANEISESMKKIGDAEMSVVVEKLLQLVKKSE</sequence>
<feature type="chain" id="PRO_0000310730" description="Flavanone 7-O-glucoside 2''-O-beta-L-rhamnosyltransferase">
    <location>
        <begin position="1"/>
        <end position="452"/>
    </location>
</feature>
<feature type="transmembrane region" description="Helical" evidence="3">
    <location>
        <begin position="136"/>
        <end position="156"/>
    </location>
</feature>
<feature type="coiled-coil region" evidence="3">
    <location>
        <begin position="407"/>
        <end position="436"/>
    </location>
</feature>
<feature type="active site" description="Proton acceptor" evidence="1">
    <location>
        <position position="21"/>
    </location>
</feature>
<feature type="active site" description="Charge relay" evidence="1">
    <location>
        <position position="121"/>
    </location>
</feature>
<feature type="binding site" evidence="2">
    <location>
        <position position="21"/>
    </location>
    <ligand>
        <name>an anthocyanidin</name>
        <dbReference type="ChEBI" id="CHEBI:143576"/>
    </ligand>
</feature>
<feature type="binding site" evidence="2">
    <location>
        <position position="268"/>
    </location>
    <ligand>
        <name>UDP-beta-L-rhamnose</name>
        <dbReference type="ChEBI" id="CHEBI:83836"/>
    </ligand>
</feature>
<feature type="binding site" evidence="2">
    <location>
        <position position="330"/>
    </location>
    <ligand>
        <name>UDP-beta-L-rhamnose</name>
        <dbReference type="ChEBI" id="CHEBI:83836"/>
    </ligand>
</feature>
<feature type="binding site" evidence="2">
    <location>
        <position position="347"/>
    </location>
    <ligand>
        <name>UDP-beta-L-rhamnose</name>
        <dbReference type="ChEBI" id="CHEBI:83836"/>
    </ligand>
</feature>
<feature type="binding site" evidence="2">
    <location>
        <position position="351"/>
    </location>
    <ligand>
        <name>UDP-beta-L-rhamnose</name>
        <dbReference type="ChEBI" id="CHEBI:83836"/>
    </ligand>
</feature>
<feature type="binding site" evidence="2">
    <location>
        <position position="352"/>
    </location>
    <ligand>
        <name>UDP-beta-L-rhamnose</name>
        <dbReference type="ChEBI" id="CHEBI:83836"/>
    </ligand>
</feature>
<feature type="binding site" evidence="2">
    <location>
        <position position="355"/>
    </location>
    <ligand>
        <name>UDP-beta-L-rhamnose</name>
        <dbReference type="ChEBI" id="CHEBI:83836"/>
    </ligand>
</feature>
<name>FLRT_CITMA</name>
<organism>
    <name type="scientific">Citrus maxima</name>
    <name type="common">Pomelo</name>
    <name type="synonym">Citrus grandis</name>
    <dbReference type="NCBI Taxonomy" id="37334"/>
    <lineage>
        <taxon>Eukaryota</taxon>
        <taxon>Viridiplantae</taxon>
        <taxon>Streptophyta</taxon>
        <taxon>Embryophyta</taxon>
        <taxon>Tracheophyta</taxon>
        <taxon>Spermatophyta</taxon>
        <taxon>Magnoliopsida</taxon>
        <taxon>eudicotyledons</taxon>
        <taxon>Gunneridae</taxon>
        <taxon>Pentapetalae</taxon>
        <taxon>rosids</taxon>
        <taxon>malvids</taxon>
        <taxon>Sapindales</taxon>
        <taxon>Rutaceae</taxon>
        <taxon>Aurantioideae</taxon>
        <taxon>Citrus</taxon>
    </lineage>
</organism>
<reference key="1">
    <citation type="journal article" date="2004" name="Plant J.">
        <title>Citrus fruit bitter flavors: isolation and functional characterization of the gene Cm1,2RhaT encoding a 1,2 rhamnosyltransferase, a key enzyme in the biosynthesis of the bitter flavonoids of citrus.</title>
        <authorList>
            <person name="Frydman A."/>
            <person name="Weisshaus O."/>
            <person name="Bar-Peled M."/>
            <person name="Huhman D.V."/>
            <person name="Sumner L.W."/>
            <person name="Marin F.R."/>
            <person name="Lewinsohn E."/>
            <person name="Fluhr R."/>
            <person name="Gressel J."/>
            <person name="Eyal Y."/>
        </authorList>
    </citation>
    <scope>NUCLEOTIDE SEQUENCE [MRNA]</scope>
    <scope>PROTEIN SEQUENCE OF 136-141; 178-186; 221-228; 301-308 AND 379-392</scope>
    <scope>TISSUE SPECIFICITY</scope>
</reference>
<reference key="2">
    <citation type="submission" date="2011-06" db="EMBL/GenBank/DDBJ databases">
        <authorList>
            <person name="Frydman A."/>
            <person name="Weisshaus O."/>
            <person name="Bar-Peled M."/>
            <person name="Lewinsohn E."/>
            <person name="Neuman H."/>
            <person name="Fluhr R."/>
            <person name="Gressel J."/>
            <person name="Eyal Y."/>
        </authorList>
    </citation>
    <scope>SEQUENCE REVISION</scope>
</reference>
<reference key="3">
    <citation type="journal article" date="1991" name="J. Biol. Chem.">
        <title>UDP-rhamnose:flavanone-7-O-glucoside-2''-O-rhamnosyltransferase. Purification and characterization of an enzyme catalyzing the production of bitter compounds in citrus.</title>
        <authorList>
            <person name="Bar-Peled M."/>
            <person name="Lewinsohn E."/>
            <person name="Fluhr R."/>
            <person name="Gressel J."/>
        </authorList>
    </citation>
    <scope>FUNCTION</scope>
    <scope>CATALYTIC ACTIVITY</scope>
    <scope>INDUCTION</scope>
    <scope>SUBUNIT</scope>
    <scope>BIOPHYSICOCHEMICAL PROPERTIES</scope>
</reference>
<gene>
    <name type="primary">C12RT1</name>
    <name type="synonym">CM12RHAT</name>
</gene>